<reference key="1">
    <citation type="submission" date="2016-07" db="EMBL/GenBank/DDBJ databases">
        <title>Multiple horizontal gene transfer events from other fungi enriched the ability of initially mycotrophic Trichoderma (Ascomycota) to feed on dead plant biomass.</title>
        <authorList>
            <consortium name="DOE Joint Genome Institute"/>
            <person name="Aerts A."/>
            <person name="Atanasova L."/>
            <person name="Chenthamara K."/>
            <person name="Zhang J."/>
            <person name="Grujic M."/>
            <person name="Henrissat B."/>
            <person name="Kuo A."/>
            <person name="Salamov A."/>
            <person name="Lipzen A."/>
            <person name="Labutti K."/>
            <person name="Barry K."/>
            <person name="Miao Y."/>
            <person name="Rahimi M.J."/>
            <person name="Shen Q."/>
            <person name="Grigoriev I.V."/>
            <person name="Kubicek C.P."/>
            <person name="Druzhinina I.S."/>
        </authorList>
    </citation>
    <scope>NUCLEOTIDE SEQUENCE [LARGE SCALE GENOMIC DNA]</scope>
    <source>
        <strain>ATCC 204424 / CBS 433.97 / NBRC 101777</strain>
    </source>
</reference>
<reference key="2">
    <citation type="journal article" date="2015" name="Microbiol. Res.">
        <title>Functional analysis of the class II hydrophobin gene HFB2-6 from the biocontrol agent Trichoderma asperellum ACCC30536.</title>
        <authorList>
            <person name="Huang Y."/>
            <person name="Mijiti G."/>
            <person name="Wang Z."/>
            <person name="Yu W."/>
            <person name="Fan H."/>
            <person name="Zhang R."/>
            <person name="Liu Z."/>
        </authorList>
    </citation>
    <scope>INDUCTION</scope>
</reference>
<gene>
    <name evidence="4" type="primary">HFB2-3</name>
    <name type="ORF">M441DRAFT_59451</name>
</gene>
<sequence>MKFFAAAALFIAGVLAAPSPNAANSVTPLCNPGLYSNAQCCAVDVLGVADLNCATPPGVVNNAAEFQAACAKIGQEARCCVLPVLGQDVLCETPLGL</sequence>
<evidence type="ECO:0000250" key="1">
    <source>
        <dbReference type="UniProtKB" id="P79073"/>
    </source>
</evidence>
<evidence type="ECO:0000255" key="2"/>
<evidence type="ECO:0000269" key="3">
    <source>
    </source>
</evidence>
<evidence type="ECO:0000303" key="4">
    <source>
    </source>
</evidence>
<evidence type="ECO:0000305" key="5"/>
<dbReference type="EMBL" id="KZ679264">
    <property type="protein sequence ID" value="PTB39397.1"/>
    <property type="molecule type" value="Genomic_DNA"/>
</dbReference>
<dbReference type="SMR" id="A0A2T3Z3L3"/>
<dbReference type="STRING" id="1042311.A0A2T3Z3L3"/>
<dbReference type="OrthoDB" id="4500971at2759"/>
<dbReference type="Proteomes" id="UP000240493">
    <property type="component" value="Unassembled WGS sequence"/>
</dbReference>
<dbReference type="GO" id="GO:0005576">
    <property type="term" value="C:extracellular region"/>
    <property type="evidence" value="ECO:0007669"/>
    <property type="project" value="UniProtKB-KW"/>
</dbReference>
<dbReference type="CDD" id="cd23508">
    <property type="entry name" value="hydrophobin_II"/>
    <property type="match status" value="1"/>
</dbReference>
<dbReference type="Gene3D" id="3.20.120.10">
    <property type="entry name" value="Hydrophobin"/>
    <property type="match status" value="1"/>
</dbReference>
<dbReference type="InterPro" id="IPR010636">
    <property type="entry name" value="Cerato-ulmin_hydrophobin"/>
</dbReference>
<dbReference type="InterPro" id="IPR036686">
    <property type="entry name" value="Hydrophobin_sf"/>
</dbReference>
<dbReference type="PANTHER" id="PTHR42341">
    <property type="entry name" value="HYDROPHOBIN"/>
    <property type="match status" value="1"/>
</dbReference>
<dbReference type="PANTHER" id="PTHR42341:SF1">
    <property type="entry name" value="HYDROPHOBIN"/>
    <property type="match status" value="1"/>
</dbReference>
<dbReference type="Pfam" id="PF06766">
    <property type="entry name" value="Hydrophobin_2"/>
    <property type="match status" value="1"/>
</dbReference>
<dbReference type="SUPFAM" id="SSF101751">
    <property type="entry name" value="Hydrophobin II, HfbII"/>
    <property type="match status" value="1"/>
</dbReference>
<feature type="signal peptide" evidence="2">
    <location>
        <begin position="1"/>
        <end position="16"/>
    </location>
</feature>
<feature type="chain" id="PRO_5015549522" description="Class II hydrophobin 3">
    <location>
        <begin position="17"/>
        <end position="97"/>
    </location>
</feature>
<feature type="disulfide bond" evidence="1">
    <location>
        <begin position="30"/>
        <end position="79"/>
    </location>
</feature>
<feature type="disulfide bond" evidence="1">
    <location>
        <begin position="40"/>
        <end position="70"/>
    </location>
</feature>
<feature type="disulfide bond" evidence="1">
    <location>
        <begin position="41"/>
        <end position="53"/>
    </location>
</feature>
<feature type="disulfide bond" evidence="1">
    <location>
        <begin position="80"/>
        <end position="91"/>
    </location>
</feature>
<protein>
    <recommendedName>
        <fullName evidence="4">Class II hydrophobin 3</fullName>
    </recommendedName>
</protein>
<keyword id="KW-0134">Cell wall</keyword>
<keyword id="KW-1015">Disulfide bond</keyword>
<keyword id="KW-1185">Reference proteome</keyword>
<keyword id="KW-0964">Secreted</keyword>
<keyword id="KW-0732">Signal</keyword>
<organism>
    <name type="scientific">Trichoderma asperellum (strain ATCC 204424 / CBS 433.97 / NBRC 101777)</name>
    <dbReference type="NCBI Taxonomy" id="1042311"/>
    <lineage>
        <taxon>Eukaryota</taxon>
        <taxon>Fungi</taxon>
        <taxon>Dikarya</taxon>
        <taxon>Ascomycota</taxon>
        <taxon>Pezizomycotina</taxon>
        <taxon>Sordariomycetes</taxon>
        <taxon>Hypocreomycetidae</taxon>
        <taxon>Hypocreales</taxon>
        <taxon>Hypocreaceae</taxon>
        <taxon>Trichoderma</taxon>
    </lineage>
</organism>
<proteinExistence type="evidence at transcript level"/>
<accession>A0A2T3Z3L3</accession>
<name>HFB23_TRIA4</name>
<comment type="function">
    <text evidence="5">Aerial growth, conidiation, and dispersal of filamentous fungi in the environment rely upon a capability of their secreting small amphipathic proteins called hydrophobins (HPBs) with low sequence identity. Class I can self-assemble into an outermost layer of rodlet bundles on aerial cell surfaces, conferring cellular hydrophobicity that supports fungal growth, development and dispersal; whereas Class II form highly ordered films at water-air interfaces through intermolecular interactions but contribute nothing to the rodlet structure.</text>
</comment>
<comment type="subunit">
    <text evidence="1">Homodimer (By similarity). Homodimers further self-assemble to form highly ordered films at water-air interfaces through intermolecular interactions (By similarity).</text>
</comment>
<comment type="subcellular location">
    <subcellularLocation>
        <location evidence="1">Secreted</location>
    </subcellularLocation>
    <subcellularLocation>
        <location evidence="1">Secreted</location>
        <location evidence="1">Cell wall</location>
    </subcellularLocation>
</comment>
<comment type="induction">
    <text evidence="3">Expression is highly induced in the presence of root and stem powder of Shanxin poplar, and slightly induced under carbon or nitrogen starvation.</text>
</comment>
<comment type="similarity">
    <text evidence="5">Belongs to the cerato-ulmin hydrophobin family.</text>
</comment>